<gene>
    <name type="primary">BG04</name>
</gene>
<dbReference type="Proteomes" id="UP000076420">
    <property type="component" value="Unassembled WGS sequence"/>
</dbReference>
<dbReference type="Proteomes" id="UP001165740">
    <property type="component" value="Unplaced"/>
</dbReference>
<dbReference type="GO" id="GO:0005576">
    <property type="term" value="C:extracellular region"/>
    <property type="evidence" value="ECO:0007669"/>
    <property type="project" value="UniProtKB-SubCell"/>
</dbReference>
<dbReference type="GO" id="GO:0030246">
    <property type="term" value="F:carbohydrate binding"/>
    <property type="evidence" value="ECO:0007669"/>
    <property type="project" value="UniProtKB-KW"/>
</dbReference>
<protein>
    <recommendedName>
        <fullName>Hemolymph 65 kDa lectin BG04</fullName>
    </recommendedName>
</protein>
<proteinExistence type="evidence at protein level"/>
<organism>
    <name type="scientific">Biomphalaria glabrata</name>
    <name type="common">Bloodfluke planorb</name>
    <name type="synonym">Freshwater snail</name>
    <dbReference type="NCBI Taxonomy" id="6526"/>
    <lineage>
        <taxon>Eukaryota</taxon>
        <taxon>Metazoa</taxon>
        <taxon>Spiralia</taxon>
        <taxon>Lophotrochozoa</taxon>
        <taxon>Mollusca</taxon>
        <taxon>Gastropoda</taxon>
        <taxon>Heterobranchia</taxon>
        <taxon>Euthyneura</taxon>
        <taxon>Panpulmonata</taxon>
        <taxon>Hygrophila</taxon>
        <taxon>Lymnaeoidea</taxon>
        <taxon>Planorbidae</taxon>
        <taxon>Biomphalaria</taxon>
    </lineage>
</organism>
<name>LE04_BIOGL</name>
<comment type="function">
    <text>Binds and precipitates antigens of the parasite Echinostoma paraensei.</text>
</comment>
<comment type="subcellular location">
    <subcellularLocation>
        <location>Secreted</location>
    </subcellularLocation>
</comment>
<comment type="tissue specificity">
    <text>Hemolymph.</text>
</comment>
<comment type="induction">
    <text>By infection.</text>
</comment>
<accession>P80743</accession>
<feature type="chain" id="PRO_0000084395" description="Hemolymph 65 kDa lectin BG04">
    <location>
        <begin position="1" status="less than"/>
        <end position="21" status="greater than"/>
    </location>
</feature>
<feature type="non-terminal residue">
    <location>
        <position position="1"/>
    </location>
</feature>
<feature type="non-terminal residue">
    <location>
        <position position="21"/>
    </location>
</feature>
<reference key="1">
    <citation type="journal article" date="1997" name="Proc. Natl. Acad. Sci. U.S.A.">
        <title>A family of fibrinogen-related proteins that precipitates parasite-derived molecules is produced by an invertebrate after infection.</title>
        <authorList>
            <person name="Adema C.M."/>
            <person name="Hertel L.A."/>
            <person name="Miller R.D."/>
            <person name="Loker E.S."/>
        </authorList>
    </citation>
    <scope>PROTEIN SEQUENCE</scope>
    <source>
        <strain>M-line</strain>
        <tissue>Hemolymph</tissue>
    </source>
</reference>
<keyword id="KW-0903">Direct protein sequencing</keyword>
<keyword id="KW-0430">Lectin</keyword>
<keyword id="KW-1185">Reference proteome</keyword>
<keyword id="KW-0964">Secreted</keyword>
<sequence>GKPDGAFXDNITVVESVXFXI</sequence>